<keyword id="KW-0131">Cell cycle</keyword>
<keyword id="KW-0132">Cell division</keyword>
<keyword id="KW-0133">Cell shape</keyword>
<keyword id="KW-0961">Cell wall biogenesis/degradation</keyword>
<keyword id="KW-0963">Cytoplasm</keyword>
<keyword id="KW-0573">Peptidoglycan synthesis</keyword>
<keyword id="KW-0670">Pyruvate</keyword>
<keyword id="KW-0808">Transferase</keyword>
<evidence type="ECO:0000255" key="1">
    <source>
        <dbReference type="HAMAP-Rule" id="MF_00111"/>
    </source>
</evidence>
<comment type="function">
    <text evidence="1">Cell wall formation. Adds enolpyruvyl to UDP-N-acetylglucosamine.</text>
</comment>
<comment type="catalytic activity">
    <reaction evidence="1">
        <text>phosphoenolpyruvate + UDP-N-acetyl-alpha-D-glucosamine = UDP-N-acetyl-3-O-(1-carboxyvinyl)-alpha-D-glucosamine + phosphate</text>
        <dbReference type="Rhea" id="RHEA:18681"/>
        <dbReference type="ChEBI" id="CHEBI:43474"/>
        <dbReference type="ChEBI" id="CHEBI:57705"/>
        <dbReference type="ChEBI" id="CHEBI:58702"/>
        <dbReference type="ChEBI" id="CHEBI:68483"/>
        <dbReference type="EC" id="2.5.1.7"/>
    </reaction>
</comment>
<comment type="pathway">
    <text evidence="1">Cell wall biogenesis; peptidoglycan biosynthesis.</text>
</comment>
<comment type="subcellular location">
    <subcellularLocation>
        <location evidence="1">Cytoplasm</location>
    </subcellularLocation>
</comment>
<comment type="similarity">
    <text evidence="1">Belongs to the EPSP synthase family. MurA subfamily.</text>
</comment>
<accession>Q8NVG3</accession>
<dbReference type="EC" id="2.5.1.7" evidence="1"/>
<dbReference type="EMBL" id="BA000033">
    <property type="protein sequence ID" value="BAB95913.1"/>
    <property type="molecule type" value="Genomic_DNA"/>
</dbReference>
<dbReference type="RefSeq" id="WP_000046597.1">
    <property type="nucleotide sequence ID" value="NC_003923.1"/>
</dbReference>
<dbReference type="SMR" id="Q8NVG3"/>
<dbReference type="KEGG" id="sam:MW2048"/>
<dbReference type="HOGENOM" id="CLU_027387_0_0_9"/>
<dbReference type="UniPathway" id="UPA00219"/>
<dbReference type="GO" id="GO:0005737">
    <property type="term" value="C:cytoplasm"/>
    <property type="evidence" value="ECO:0007669"/>
    <property type="project" value="UniProtKB-SubCell"/>
</dbReference>
<dbReference type="GO" id="GO:0008760">
    <property type="term" value="F:UDP-N-acetylglucosamine 1-carboxyvinyltransferase activity"/>
    <property type="evidence" value="ECO:0007669"/>
    <property type="project" value="UniProtKB-UniRule"/>
</dbReference>
<dbReference type="GO" id="GO:0051301">
    <property type="term" value="P:cell division"/>
    <property type="evidence" value="ECO:0007669"/>
    <property type="project" value="UniProtKB-KW"/>
</dbReference>
<dbReference type="GO" id="GO:0071555">
    <property type="term" value="P:cell wall organization"/>
    <property type="evidence" value="ECO:0007669"/>
    <property type="project" value="UniProtKB-KW"/>
</dbReference>
<dbReference type="GO" id="GO:0009252">
    <property type="term" value="P:peptidoglycan biosynthetic process"/>
    <property type="evidence" value="ECO:0007669"/>
    <property type="project" value="UniProtKB-UniRule"/>
</dbReference>
<dbReference type="GO" id="GO:0008360">
    <property type="term" value="P:regulation of cell shape"/>
    <property type="evidence" value="ECO:0007669"/>
    <property type="project" value="UniProtKB-KW"/>
</dbReference>
<dbReference type="GO" id="GO:0019277">
    <property type="term" value="P:UDP-N-acetylgalactosamine biosynthetic process"/>
    <property type="evidence" value="ECO:0007669"/>
    <property type="project" value="InterPro"/>
</dbReference>
<dbReference type="CDD" id="cd01555">
    <property type="entry name" value="UdpNAET"/>
    <property type="match status" value="1"/>
</dbReference>
<dbReference type="FunFam" id="3.65.10.10:FF:000001">
    <property type="entry name" value="UDP-N-acetylglucosamine 1-carboxyvinyltransferase"/>
    <property type="match status" value="1"/>
</dbReference>
<dbReference type="Gene3D" id="3.65.10.10">
    <property type="entry name" value="Enolpyruvate transferase domain"/>
    <property type="match status" value="2"/>
</dbReference>
<dbReference type="HAMAP" id="MF_00111">
    <property type="entry name" value="MurA"/>
    <property type="match status" value="1"/>
</dbReference>
<dbReference type="InterPro" id="IPR001986">
    <property type="entry name" value="Enolpyruvate_Tfrase_dom"/>
</dbReference>
<dbReference type="InterPro" id="IPR036968">
    <property type="entry name" value="Enolpyruvate_Tfrase_sf"/>
</dbReference>
<dbReference type="InterPro" id="IPR050068">
    <property type="entry name" value="MurA_subfamily"/>
</dbReference>
<dbReference type="InterPro" id="IPR013792">
    <property type="entry name" value="RNA3'P_cycl/enolpyr_Trfase_a/b"/>
</dbReference>
<dbReference type="InterPro" id="IPR005750">
    <property type="entry name" value="UDP_GlcNAc_COvinyl_MurA"/>
</dbReference>
<dbReference type="NCBIfam" id="TIGR01072">
    <property type="entry name" value="murA"/>
    <property type="match status" value="1"/>
</dbReference>
<dbReference type="NCBIfam" id="NF006873">
    <property type="entry name" value="PRK09369.1"/>
    <property type="match status" value="1"/>
</dbReference>
<dbReference type="NCBIfam" id="NF009470">
    <property type="entry name" value="PRK12830.1"/>
    <property type="match status" value="1"/>
</dbReference>
<dbReference type="PANTHER" id="PTHR43783">
    <property type="entry name" value="UDP-N-ACETYLGLUCOSAMINE 1-CARBOXYVINYLTRANSFERASE"/>
    <property type="match status" value="1"/>
</dbReference>
<dbReference type="PANTHER" id="PTHR43783:SF2">
    <property type="entry name" value="UDP-N-ACETYLGLUCOSAMINE 1-CARBOXYVINYLTRANSFERASE 2"/>
    <property type="match status" value="1"/>
</dbReference>
<dbReference type="Pfam" id="PF00275">
    <property type="entry name" value="EPSP_synthase"/>
    <property type="match status" value="1"/>
</dbReference>
<dbReference type="SUPFAM" id="SSF55205">
    <property type="entry name" value="EPT/RTPC-like"/>
    <property type="match status" value="1"/>
</dbReference>
<feature type="chain" id="PRO_0000178925" description="UDP-N-acetylglucosamine 1-carboxyvinyltransferase 2">
    <location>
        <begin position="1"/>
        <end position="419"/>
    </location>
</feature>
<feature type="active site" description="Proton donor" evidence="1">
    <location>
        <position position="118"/>
    </location>
</feature>
<feature type="binding site" evidence="1">
    <location>
        <begin position="24"/>
        <end position="25"/>
    </location>
    <ligand>
        <name>phosphoenolpyruvate</name>
        <dbReference type="ChEBI" id="CHEBI:58702"/>
    </ligand>
</feature>
<feature type="binding site" evidence="1">
    <location>
        <position position="94"/>
    </location>
    <ligand>
        <name>UDP-N-acetyl-alpha-D-glucosamine</name>
        <dbReference type="ChEBI" id="CHEBI:57705"/>
    </ligand>
</feature>
<feature type="binding site" evidence="1">
    <location>
        <begin position="123"/>
        <end position="127"/>
    </location>
    <ligand>
        <name>UDP-N-acetyl-alpha-D-glucosamine</name>
        <dbReference type="ChEBI" id="CHEBI:57705"/>
    </ligand>
</feature>
<feature type="binding site" evidence="1">
    <location>
        <position position="307"/>
    </location>
    <ligand>
        <name>UDP-N-acetyl-alpha-D-glucosamine</name>
        <dbReference type="ChEBI" id="CHEBI:57705"/>
    </ligand>
</feature>
<feature type="binding site" evidence="1">
    <location>
        <position position="329"/>
    </location>
    <ligand>
        <name>UDP-N-acetyl-alpha-D-glucosamine</name>
        <dbReference type="ChEBI" id="CHEBI:57705"/>
    </ligand>
</feature>
<feature type="modified residue" description="2-(S-cysteinyl)pyruvic acid O-phosphothioketal" evidence="1">
    <location>
        <position position="118"/>
    </location>
</feature>
<sequence length="419" mass="45105">MAQEVIKIRGGRTLNGEVNISGAKNSAVAIIPATLLAQGHVKLEGLPQISDVKTLVSLLEDLNIKASLNGMELEVDTTEIQNAALPNNKVESLRASYYMMGAMLGRFKKCVIGLPGGCPLGPRPIDQHIKGFKALGAEIDESSTTSMKIEAKELKGAHIFLDMVSVGATINIMLAAVYATGQTVIENAAKEPEVVDVANFLTSMGANIKGAGTSTIKINGVKELHGSEYQVIPDRIEAGTYMCIAAACGENVILNNIVPKHVETLTAKFSELGVNVDVRDERIRINNNAPYQFVDIKTLVYPGFATDLQQPITPLLFMANGPSFVTDTIYPERFKHVEELKRMGANIEVDEGTATIKPSTLHGAEVYASDLRAGACLIIAGLIAEGVTTIYNVKHIYRGYTDIVEHLKALGADIWTETV</sequence>
<protein>
    <recommendedName>
        <fullName evidence="1">UDP-N-acetylglucosamine 1-carboxyvinyltransferase 2</fullName>
        <ecNumber evidence="1">2.5.1.7</ecNumber>
    </recommendedName>
    <alternativeName>
        <fullName evidence="1">Enoylpyruvate transferase 2</fullName>
    </alternativeName>
    <alternativeName>
        <fullName evidence="1">UDP-N-acetylglucosamine enolpyruvyl transferase 2</fullName>
        <shortName evidence="1">EPT 2</shortName>
    </alternativeName>
</protein>
<organism>
    <name type="scientific">Staphylococcus aureus (strain MW2)</name>
    <dbReference type="NCBI Taxonomy" id="196620"/>
    <lineage>
        <taxon>Bacteria</taxon>
        <taxon>Bacillati</taxon>
        <taxon>Bacillota</taxon>
        <taxon>Bacilli</taxon>
        <taxon>Bacillales</taxon>
        <taxon>Staphylococcaceae</taxon>
        <taxon>Staphylococcus</taxon>
    </lineage>
</organism>
<reference key="1">
    <citation type="journal article" date="2002" name="Lancet">
        <title>Genome and virulence determinants of high virulence community-acquired MRSA.</title>
        <authorList>
            <person name="Baba T."/>
            <person name="Takeuchi F."/>
            <person name="Kuroda M."/>
            <person name="Yuzawa H."/>
            <person name="Aoki K."/>
            <person name="Oguchi A."/>
            <person name="Nagai Y."/>
            <person name="Iwama N."/>
            <person name="Asano K."/>
            <person name="Naimi T."/>
            <person name="Kuroda H."/>
            <person name="Cui L."/>
            <person name="Yamamoto K."/>
            <person name="Hiramatsu K."/>
        </authorList>
    </citation>
    <scope>NUCLEOTIDE SEQUENCE [LARGE SCALE GENOMIC DNA]</scope>
    <source>
        <strain>MW2</strain>
    </source>
</reference>
<name>MURA2_STAAW</name>
<gene>
    <name evidence="1" type="primary">murA2</name>
    <name type="synonym">murZ</name>
    <name type="ordered locus">MW2048</name>
</gene>
<proteinExistence type="inferred from homology"/>